<feature type="chain" id="PRO_0000056027" description="E3 ubiquitin-protein ligase rififylin">
    <location>
        <begin position="1"/>
        <end position="362"/>
    </location>
</feature>
<feature type="domain" description="SAP 1">
    <location>
        <begin position="101"/>
        <end position="120"/>
    </location>
</feature>
<feature type="domain" description="SAP 2">
    <location>
        <begin position="249"/>
        <end position="263"/>
    </location>
</feature>
<feature type="zinc finger region" description="FYVE-type">
    <location>
        <begin position="41"/>
        <end position="93"/>
    </location>
</feature>
<feature type="zinc finger region" description="RING-type" evidence="4">
    <location>
        <begin position="315"/>
        <end position="350"/>
    </location>
</feature>
<feature type="region of interest" description="Disordered" evidence="5">
    <location>
        <begin position="17"/>
        <end position="37"/>
    </location>
</feature>
<feature type="region of interest" description="Disordered" evidence="5">
    <location>
        <begin position="162"/>
        <end position="183"/>
    </location>
</feature>
<feature type="compositionally biased region" description="Polar residues" evidence="5">
    <location>
        <begin position="24"/>
        <end position="37"/>
    </location>
</feature>
<feature type="modified residue" description="Phosphoserine" evidence="12">
    <location>
        <position position="225"/>
    </location>
</feature>
<feature type="modified residue" description="Phosphoserine" evidence="12">
    <location>
        <position position="228"/>
    </location>
</feature>
<feature type="modified residue" description="Phosphoserine" evidence="2">
    <location>
        <position position="231"/>
    </location>
</feature>
<feature type="modified residue" description="Phosphoserine" evidence="12">
    <location>
        <position position="239"/>
    </location>
</feature>
<feature type="splice variant" id="VSP_015757" description="In isoform 2." evidence="8">
    <location>
        <begin position="196"/>
        <end position="223"/>
    </location>
</feature>
<gene>
    <name evidence="11" type="primary">Rffl</name>
</gene>
<proteinExistence type="evidence at protein level"/>
<dbReference type="EC" id="2.3.2.27" evidence="3"/>
<dbReference type="EMBL" id="AY157969">
    <property type="protein sequence ID" value="AAN60074.1"/>
    <property type="molecule type" value="mRNA"/>
</dbReference>
<dbReference type="EMBL" id="BC079216">
    <property type="protein sequence ID" value="AAH79216.1"/>
    <property type="molecule type" value="mRNA"/>
</dbReference>
<dbReference type="RefSeq" id="NP_001004068.1">
    <molecule id="Q8CIN9-2"/>
    <property type="nucleotide sequence ID" value="NM_001004068.2"/>
</dbReference>
<dbReference type="RefSeq" id="NP_001386503.1">
    <molecule id="Q8CIN9-1"/>
    <property type="nucleotide sequence ID" value="NM_001399574.1"/>
</dbReference>
<dbReference type="RefSeq" id="XP_006247040.1">
    <property type="nucleotide sequence ID" value="XM_006246978.3"/>
</dbReference>
<dbReference type="RefSeq" id="XP_006247041.1">
    <property type="nucleotide sequence ID" value="XM_006246979.3"/>
</dbReference>
<dbReference type="RefSeq" id="XP_063124570.1">
    <molecule id="Q8CIN9-1"/>
    <property type="nucleotide sequence ID" value="XM_063268500.1"/>
</dbReference>
<dbReference type="SMR" id="Q8CIN9"/>
<dbReference type="FunCoup" id="Q8CIN9">
    <property type="interactions" value="1560"/>
</dbReference>
<dbReference type="STRING" id="10116.ENSRNOP00000067950"/>
<dbReference type="GlyGen" id="Q8CIN9">
    <property type="glycosylation" value="1 site"/>
</dbReference>
<dbReference type="iPTMnet" id="Q8CIN9"/>
<dbReference type="PhosphoSitePlus" id="Q8CIN9"/>
<dbReference type="PaxDb" id="10116-ENSRNOP00000045245"/>
<dbReference type="Ensembl" id="ENSRNOT00000076598.3">
    <molecule id="Q8CIN9-2"/>
    <property type="protein sequence ID" value="ENSRNOP00000067950.1"/>
    <property type="gene ID" value="ENSRNOG00000007596.9"/>
</dbReference>
<dbReference type="GeneID" id="282844"/>
<dbReference type="KEGG" id="rno:282844"/>
<dbReference type="AGR" id="RGD:727916"/>
<dbReference type="CTD" id="117584"/>
<dbReference type="RGD" id="727916">
    <property type="gene designation" value="Rffl"/>
</dbReference>
<dbReference type="VEuPathDB" id="HostDB:ENSRNOG00000007596"/>
<dbReference type="eggNOG" id="KOG4275">
    <property type="taxonomic scope" value="Eukaryota"/>
</dbReference>
<dbReference type="GeneTree" id="ENSGT00390000012719"/>
<dbReference type="InParanoid" id="Q8CIN9"/>
<dbReference type="OrthoDB" id="6339724at2759"/>
<dbReference type="PhylomeDB" id="Q8CIN9"/>
<dbReference type="Reactome" id="R-RNO-6804757">
    <property type="pathway name" value="Regulation of TP53 Degradation"/>
</dbReference>
<dbReference type="UniPathway" id="UPA00143"/>
<dbReference type="PRO" id="PR:Q8CIN9"/>
<dbReference type="Proteomes" id="UP000002494">
    <property type="component" value="Chromosome 10"/>
</dbReference>
<dbReference type="Bgee" id="ENSRNOG00000007596">
    <property type="expression patterns" value="Expressed in testis and 19 other cell types or tissues"/>
</dbReference>
<dbReference type="ExpressionAtlas" id="Q8CIN9">
    <property type="expression patterns" value="baseline and differential"/>
</dbReference>
<dbReference type="GO" id="GO:0005737">
    <property type="term" value="C:cytoplasm"/>
    <property type="evidence" value="ECO:0000250"/>
    <property type="project" value="UniProtKB"/>
</dbReference>
<dbReference type="GO" id="GO:0031410">
    <property type="term" value="C:cytoplasmic vesicle"/>
    <property type="evidence" value="ECO:0000266"/>
    <property type="project" value="RGD"/>
</dbReference>
<dbReference type="GO" id="GO:0005829">
    <property type="term" value="C:cytosol"/>
    <property type="evidence" value="ECO:0007669"/>
    <property type="project" value="UniProtKB-SubCell"/>
</dbReference>
<dbReference type="GO" id="GO:0010008">
    <property type="term" value="C:endosome membrane"/>
    <property type="evidence" value="ECO:0000250"/>
    <property type="project" value="UniProtKB"/>
</dbReference>
<dbReference type="GO" id="GO:0005886">
    <property type="term" value="C:plasma membrane"/>
    <property type="evidence" value="ECO:0000250"/>
    <property type="project" value="UniProtKB"/>
</dbReference>
<dbReference type="GO" id="GO:0055038">
    <property type="term" value="C:recycling endosome membrane"/>
    <property type="evidence" value="ECO:0007669"/>
    <property type="project" value="UniProtKB-SubCell"/>
</dbReference>
<dbReference type="GO" id="GO:0002039">
    <property type="term" value="F:p53 binding"/>
    <property type="evidence" value="ECO:0000266"/>
    <property type="project" value="RGD"/>
</dbReference>
<dbReference type="GO" id="GO:0002020">
    <property type="term" value="F:protease binding"/>
    <property type="evidence" value="ECO:0000266"/>
    <property type="project" value="RGD"/>
</dbReference>
<dbReference type="GO" id="GO:0019901">
    <property type="term" value="F:protein kinase binding"/>
    <property type="evidence" value="ECO:0000266"/>
    <property type="project" value="RGD"/>
</dbReference>
<dbReference type="GO" id="GO:0061630">
    <property type="term" value="F:ubiquitin protein ligase activity"/>
    <property type="evidence" value="ECO:0000250"/>
    <property type="project" value="UniProtKB"/>
</dbReference>
<dbReference type="GO" id="GO:0031625">
    <property type="term" value="F:ubiquitin protein ligase binding"/>
    <property type="evidence" value="ECO:0000266"/>
    <property type="project" value="RGD"/>
</dbReference>
<dbReference type="GO" id="GO:0008270">
    <property type="term" value="F:zinc ion binding"/>
    <property type="evidence" value="ECO:0007669"/>
    <property type="project" value="UniProtKB-KW"/>
</dbReference>
<dbReference type="GO" id="GO:0006915">
    <property type="term" value="P:apoptotic process"/>
    <property type="evidence" value="ECO:0007669"/>
    <property type="project" value="UniProtKB-KW"/>
</dbReference>
<dbReference type="GO" id="GO:0006886">
    <property type="term" value="P:intracellular protein transport"/>
    <property type="evidence" value="ECO:0000266"/>
    <property type="project" value="RGD"/>
</dbReference>
<dbReference type="GO" id="GO:1902042">
    <property type="term" value="P:negative regulation of extrinsic apoptotic signaling pathway via death domain receptors"/>
    <property type="evidence" value="ECO:0000250"/>
    <property type="project" value="UniProtKB"/>
</dbReference>
<dbReference type="GO" id="GO:1901797">
    <property type="term" value="P:negative regulation of signal transduction by p53 class mediator"/>
    <property type="evidence" value="ECO:0000250"/>
    <property type="project" value="UniProtKB"/>
</dbReference>
<dbReference type="GO" id="GO:0010804">
    <property type="term" value="P:negative regulation of tumor necrosis factor-mediated signaling pathway"/>
    <property type="evidence" value="ECO:0000250"/>
    <property type="project" value="UniProtKB"/>
</dbReference>
<dbReference type="GO" id="GO:0043161">
    <property type="term" value="P:proteasome-mediated ubiquitin-dependent protein catabolic process"/>
    <property type="evidence" value="ECO:0000250"/>
    <property type="project" value="UniProtKB"/>
</dbReference>
<dbReference type="GO" id="GO:0070936">
    <property type="term" value="P:protein K48-linked ubiquitination"/>
    <property type="evidence" value="ECO:0000250"/>
    <property type="project" value="UniProtKB"/>
</dbReference>
<dbReference type="GO" id="GO:0010762">
    <property type="term" value="P:regulation of fibroblast migration"/>
    <property type="evidence" value="ECO:0000250"/>
    <property type="project" value="UniProtKB"/>
</dbReference>
<dbReference type="GO" id="GO:0006511">
    <property type="term" value="P:ubiquitin-dependent protein catabolic process"/>
    <property type="evidence" value="ECO:0000250"/>
    <property type="project" value="UniProtKB"/>
</dbReference>
<dbReference type="CDD" id="cd15770">
    <property type="entry name" value="FYVE_CARP2"/>
    <property type="match status" value="1"/>
</dbReference>
<dbReference type="CDD" id="cd16707">
    <property type="entry name" value="RING-HC_CARP2"/>
    <property type="match status" value="1"/>
</dbReference>
<dbReference type="FunFam" id="1.10.720.140:FF:000001">
    <property type="entry name" value="E3 ubiquitin-protein ligase RNF34 isoform X1"/>
    <property type="match status" value="1"/>
</dbReference>
<dbReference type="FunFam" id="3.30.40.10:FF:000110">
    <property type="entry name" value="E3 ubiquitin-protein ligase RNF34 isoform X1"/>
    <property type="match status" value="1"/>
</dbReference>
<dbReference type="Gene3D" id="1.10.720.140">
    <property type="match status" value="1"/>
</dbReference>
<dbReference type="Gene3D" id="3.30.40.10">
    <property type="entry name" value="Zinc/RING finger domain, C3HC4 (zinc finger)"/>
    <property type="match status" value="1"/>
</dbReference>
<dbReference type="InterPro" id="IPR049320">
    <property type="entry name" value="CARP1_2_FYVE"/>
</dbReference>
<dbReference type="InterPro" id="IPR049322">
    <property type="entry name" value="CARP2_FYVE"/>
</dbReference>
<dbReference type="InterPro" id="IPR051728">
    <property type="entry name" value="RING-FYVE_E3_ubiquitin-ligase"/>
</dbReference>
<dbReference type="InterPro" id="IPR055111">
    <property type="entry name" value="RNF34L-like_HeH"/>
</dbReference>
<dbReference type="InterPro" id="IPR036361">
    <property type="entry name" value="SAP_dom_sf"/>
</dbReference>
<dbReference type="InterPro" id="IPR011011">
    <property type="entry name" value="Znf_FYVE_PHD"/>
</dbReference>
<dbReference type="InterPro" id="IPR001841">
    <property type="entry name" value="Znf_RING"/>
</dbReference>
<dbReference type="InterPro" id="IPR013083">
    <property type="entry name" value="Znf_RING/FYVE/PHD"/>
</dbReference>
<dbReference type="PANTHER" id="PTHR14879">
    <property type="entry name" value="CASPASE REGULATOR, RING FINGER DOMAIN-CONTAINING"/>
    <property type="match status" value="1"/>
</dbReference>
<dbReference type="PANTHER" id="PTHR14879:SF2">
    <property type="entry name" value="E3 UBIQUITIN-PROTEIN LIGASE RIFIFYLIN"/>
    <property type="match status" value="1"/>
</dbReference>
<dbReference type="Pfam" id="PF21272">
    <property type="entry name" value="FYVE_CARP1-2"/>
    <property type="match status" value="1"/>
</dbReference>
<dbReference type="Pfam" id="PF22968">
    <property type="entry name" value="RNF34L-like_3rd"/>
    <property type="match status" value="1"/>
</dbReference>
<dbReference type="Pfam" id="PF23632">
    <property type="entry name" value="SAP_RNF34_RFFL"/>
    <property type="match status" value="1"/>
</dbReference>
<dbReference type="Pfam" id="PF13920">
    <property type="entry name" value="zf-C3HC4_3"/>
    <property type="match status" value="1"/>
</dbReference>
<dbReference type="SMART" id="SM00184">
    <property type="entry name" value="RING"/>
    <property type="match status" value="1"/>
</dbReference>
<dbReference type="SUPFAM" id="SSF57903">
    <property type="entry name" value="FYVE/PHD zinc finger"/>
    <property type="match status" value="1"/>
</dbReference>
<dbReference type="SUPFAM" id="SSF57850">
    <property type="entry name" value="RING/U-box"/>
    <property type="match status" value="1"/>
</dbReference>
<dbReference type="SUPFAM" id="SSF68906">
    <property type="entry name" value="SAP domain"/>
    <property type="match status" value="1"/>
</dbReference>
<dbReference type="PROSITE" id="PS50089">
    <property type="entry name" value="ZF_RING_2"/>
    <property type="match status" value="1"/>
</dbReference>
<sequence>MWASCCNWFCLDGQPEETPPPQGARTQAYSNPGYSSFPSPTGSEPSCKACGVHFASTTRKQTCLDCKKNFCMTCSSQEGNGPRLCLLCLRFRATAFQREELMKMKVKDLRDYLSLHDISTEMCREKEELVFLVLGQQPVISEADRTRAPTLPQAFPEQQAFLTQPQSSTVPPTSPGLPSSPAQVTSVLAQDQETQQAIGHVSQDHEEPIFLESTARVPPEDETQSVDSEDSFVPGRRASLSDLTHLEDIEGLTVRQLKEILARNFVNYKGCCEKWELMERVTRLYKDQKGLQHLVSGNEDQNGGAVPSGLEENLCKICMDSPIDCVLLECGHMVTCTKCGKRMNECPICRQYVIRAVHVFRS</sequence>
<organism>
    <name type="scientific">Rattus norvegicus</name>
    <name type="common">Rat</name>
    <dbReference type="NCBI Taxonomy" id="10116"/>
    <lineage>
        <taxon>Eukaryota</taxon>
        <taxon>Metazoa</taxon>
        <taxon>Chordata</taxon>
        <taxon>Craniata</taxon>
        <taxon>Vertebrata</taxon>
        <taxon>Euteleostomi</taxon>
        <taxon>Mammalia</taxon>
        <taxon>Eutheria</taxon>
        <taxon>Euarchontoglires</taxon>
        <taxon>Glires</taxon>
        <taxon>Rodentia</taxon>
        <taxon>Myomorpha</taxon>
        <taxon>Muroidea</taxon>
        <taxon>Muridae</taxon>
        <taxon>Murinae</taxon>
        <taxon>Rattus</taxon>
    </lineage>
</organism>
<reference key="1">
    <citation type="journal article" date="2003" name="J. Neurochem.">
        <title>A palmitoylated RING finger ubiquitin ligase and its homologue in the brain membranes.</title>
        <authorList>
            <person name="Araki K."/>
            <person name="Kawamura M."/>
            <person name="Suzuki T."/>
            <person name="Matsuda N."/>
            <person name="Kanbe D."/>
            <person name="Ishii K."/>
            <person name="Ichikawa T."/>
            <person name="Kumanishi T."/>
            <person name="Chiba T."/>
            <person name="Tanaka K."/>
            <person name="Nawa H."/>
        </authorList>
    </citation>
    <scope>NUCLEOTIDE SEQUENCE [MRNA] (ISOFORM 1)</scope>
    <scope>FUNCTION</scope>
    <scope>UBIQUITINATION</scope>
    <scope>SUBCELLULAR LOCATION</scope>
    <scope>PALMITOYLATION</scope>
    <scope>TISSUE SPECIFICITY</scope>
    <source>
        <tissue>Hippocampus</tissue>
    </source>
</reference>
<reference key="2">
    <citation type="journal article" date="2004" name="Genome Res.">
        <title>The status, quality, and expansion of the NIH full-length cDNA project: the Mammalian Gene Collection (MGC).</title>
        <authorList>
            <consortium name="The MGC Project Team"/>
        </authorList>
    </citation>
    <scope>NUCLEOTIDE SEQUENCE [LARGE SCALE MRNA] (ISOFORM 2)</scope>
    <source>
        <tissue>Testis</tissue>
    </source>
</reference>
<reference key="3">
    <citation type="journal article" date="2012" name="Nat. Commun.">
        <title>Quantitative maps of protein phosphorylation sites across 14 different rat organs and tissues.</title>
        <authorList>
            <person name="Lundby A."/>
            <person name="Secher A."/>
            <person name="Lage K."/>
            <person name="Nordsborg N.B."/>
            <person name="Dmytriyev A."/>
            <person name="Lundby C."/>
            <person name="Olsen J.V."/>
        </authorList>
    </citation>
    <scope>PHOSPHORYLATION [LARGE SCALE ANALYSIS] AT SER-225; SER-228 AND SER-239</scope>
    <scope>IDENTIFICATION BY MASS SPECTROMETRY [LARGE SCALE ANALYSIS]</scope>
</reference>
<evidence type="ECO:0000250" key="1"/>
<evidence type="ECO:0000250" key="2">
    <source>
        <dbReference type="UniProtKB" id="Q6ZQM0"/>
    </source>
</evidence>
<evidence type="ECO:0000250" key="3">
    <source>
        <dbReference type="UniProtKB" id="Q8WZ73"/>
    </source>
</evidence>
<evidence type="ECO:0000255" key="4">
    <source>
        <dbReference type="PROSITE-ProRule" id="PRU00175"/>
    </source>
</evidence>
<evidence type="ECO:0000256" key="5">
    <source>
        <dbReference type="SAM" id="MobiDB-lite"/>
    </source>
</evidence>
<evidence type="ECO:0000269" key="6">
    <source>
    </source>
</evidence>
<evidence type="ECO:0000303" key="7">
    <source>
    </source>
</evidence>
<evidence type="ECO:0000303" key="8">
    <source>
    </source>
</evidence>
<evidence type="ECO:0000305" key="9"/>
<evidence type="ECO:0000305" key="10">
    <source>
    </source>
</evidence>
<evidence type="ECO:0000312" key="11">
    <source>
        <dbReference type="RGD" id="727916"/>
    </source>
</evidence>
<evidence type="ECO:0007744" key="12">
    <source>
    </source>
</evidence>
<comment type="function">
    <text evidence="6">E3 ubiquitin-protein ligase that regulates several biological processes through the ubiquitin-mediated proteasomal degradation of various target proteins. Mediates 'Lys-48'-linked polyubiquitination of PRR5L and its subsequent proteasomal degradation thereby indirectly regulating cell migration through the mTORC2 complex. Also ubiquitinates the caspases CASP8 and CASP10, promoting their proteasomal degradation, to negatively regulate apoptosis downstream of death domain receptors. Also negatively regulates the tumor necrosis factor-mediated signaling pathway through targeting of RIPK1 to ubiquitin-mediated proteasomal degradation. Negatively regulates p53/TP53 through its direct ubiquitination and targeting to proteasomal degradation. Indirectly, may also negatively regulate p53/TP53 through ubiquitination and degradation of SFN. May also play a role in endocytic recycling.</text>
</comment>
<comment type="catalytic activity">
    <reaction evidence="3">
        <text>S-ubiquitinyl-[E2 ubiquitin-conjugating enzyme]-L-cysteine + [acceptor protein]-L-lysine = [E2 ubiquitin-conjugating enzyme]-L-cysteine + N(6)-ubiquitinyl-[acceptor protein]-L-lysine.</text>
        <dbReference type="EC" id="2.3.2.27"/>
    </reaction>
</comment>
<comment type="pathway">
    <text evidence="3">Protein modification; protein ubiquitination.</text>
</comment>
<comment type="subunit">
    <text evidence="3">Interacts with CASP8 and CASP10. Interacts with RIPK1 (via protein kinase domain); involved in RIPK1 ubiquitination. Interacts with PRR5L. Interacts (via RING-type zinc finger) with p53/TP53; involved in p53/TP53 ubiquitination. Interacts (via RING-type zinc finger) with MDM2; the interaction stabilizes MDM2.</text>
</comment>
<comment type="subcellular location">
    <subcellularLocation>
        <location evidence="6">Cytoplasm</location>
        <location evidence="6">Cytosol</location>
    </subcellularLocation>
    <subcellularLocation>
        <location evidence="6">Cell membrane</location>
        <topology evidence="6">Peripheral membrane protein</topology>
    </subcellularLocation>
    <subcellularLocation>
        <location evidence="1">Recycling endosome membrane</location>
        <topology evidence="1">Peripheral membrane protein</topology>
    </subcellularLocation>
    <text>The FYVE-type zinc finger may mediate phosphatidylinositol phosphate-binding and control subcellular localization.</text>
</comment>
<comment type="alternative products">
    <event type="alternative splicing"/>
    <isoform>
        <id>Q8CIN9-1</id>
        <name>1</name>
        <sequence type="displayed"/>
    </isoform>
    <isoform>
        <id>Q8CIN9-2</id>
        <name>2</name>
        <sequence type="described" ref="VSP_015757"/>
    </isoform>
</comment>
<comment type="tissue specificity">
    <text evidence="6">Ubiquitous. Detected in cerebrum, cerebellum, midbrain, brain stem, hippocampus, striatum, liver, heart, lung, kidney, muscle, spleen and testis.</text>
</comment>
<comment type="domain">
    <text evidence="3">The RING-type zinc finger is required for the ubiquitination of target proteins.</text>
</comment>
<comment type="domain">
    <text evidence="2">The FYVE-type zinc finger domain is required for localization to the recycling endosome membranes and the function in endocytic recycling.</text>
</comment>
<comment type="PTM">
    <text evidence="10">Autoubiquitinated.</text>
</comment>
<comment type="PTM">
    <text evidence="6">Palmitoylated.</text>
</comment>
<comment type="PTM">
    <text evidence="1">Undergoes caspase-mediated cleavage upon death-receptor activation, by TNFSF10 for instance. May be mediated by the caspases CASP8 and CASP10 in a negative feedback loop (By similarity).</text>
</comment>
<protein>
    <recommendedName>
        <fullName>E3 ubiquitin-protein ligase rififylin</fullName>
        <ecNumber evidence="3">2.3.2.27</ecNumber>
    </recommendedName>
    <alternativeName>
        <fullName evidence="7">FYVE-RING finger protein Sakura</fullName>
    </alternativeName>
    <alternativeName>
        <fullName>RING finger and FYVE-like domain-containing protein 1</fullName>
    </alternativeName>
    <alternativeName>
        <fullName evidence="9">RING-type E3 ubiquitin transferase rififylin</fullName>
    </alternativeName>
</protein>
<name>RFFL_RAT</name>
<accession>Q8CIN9</accession>
<accession>Q6AY29</accession>
<keyword id="KW-0025">Alternative splicing</keyword>
<keyword id="KW-0053">Apoptosis</keyword>
<keyword id="KW-1003">Cell membrane</keyword>
<keyword id="KW-0963">Cytoplasm</keyword>
<keyword id="KW-0967">Endosome</keyword>
<keyword id="KW-0449">Lipoprotein</keyword>
<keyword id="KW-0472">Membrane</keyword>
<keyword id="KW-0479">Metal-binding</keyword>
<keyword id="KW-0564">Palmitate</keyword>
<keyword id="KW-0597">Phosphoprotein</keyword>
<keyword id="KW-1185">Reference proteome</keyword>
<keyword id="KW-0677">Repeat</keyword>
<keyword id="KW-0808">Transferase</keyword>
<keyword id="KW-0832">Ubl conjugation</keyword>
<keyword id="KW-0833">Ubl conjugation pathway</keyword>
<keyword id="KW-0862">Zinc</keyword>
<keyword id="KW-0863">Zinc-finger</keyword>